<protein>
    <recommendedName>
        <fullName evidence="2">ATP synthase F(1) complex subunit gamma, mitochondrial</fullName>
    </recommendedName>
    <alternativeName>
        <fullName evidence="2">ATP synthase F1 subunit gamma</fullName>
    </alternativeName>
    <alternativeName>
        <fullName>F-ATPase gamma subunit</fullName>
    </alternativeName>
</protein>
<dbReference type="EMBL" id="X55389">
    <property type="protein sequence ID" value="CAA39064.1"/>
    <property type="molecule type" value="mRNA"/>
</dbReference>
<dbReference type="EMBL" id="M22463">
    <property type="protein sequence ID" value="AAA30398.1"/>
    <property type="molecule type" value="Genomic_DNA"/>
</dbReference>
<dbReference type="EMBL" id="BC102466">
    <property type="protein sequence ID" value="AAI02467.1"/>
    <property type="molecule type" value="mRNA"/>
</dbReference>
<dbReference type="PIR" id="A32019">
    <property type="entry name" value="PWBOG"/>
</dbReference>
<dbReference type="RefSeq" id="NP_001068604.1">
    <property type="nucleotide sequence ID" value="NM_001075136.2"/>
</dbReference>
<dbReference type="RefSeq" id="XP_005214178.1">
    <molecule id="P05631-2"/>
    <property type="nucleotide sequence ID" value="XM_005214121.5"/>
</dbReference>
<dbReference type="RefSeq" id="XP_005214179.1">
    <molecule id="P05631-2"/>
    <property type="nucleotide sequence ID" value="XM_005214122.5"/>
</dbReference>
<dbReference type="RefSeq" id="XP_059748390.1">
    <molecule id="P05631-1"/>
    <property type="nucleotide sequence ID" value="XM_059892407.1"/>
</dbReference>
<dbReference type="PDB" id="1BMF">
    <property type="method" value="X-ray"/>
    <property type="resolution" value="2.85 A"/>
    <property type="chains" value="G=26-297"/>
</dbReference>
<dbReference type="PDB" id="1COW">
    <property type="method" value="X-ray"/>
    <property type="resolution" value="3.10 A"/>
    <property type="chains" value="G=26-297"/>
</dbReference>
<dbReference type="PDB" id="1E1Q">
    <property type="method" value="X-ray"/>
    <property type="resolution" value="2.61 A"/>
    <property type="chains" value="G=26-297"/>
</dbReference>
<dbReference type="PDB" id="1E1R">
    <property type="method" value="X-ray"/>
    <property type="resolution" value="2.50 A"/>
    <property type="chains" value="G=26-297"/>
</dbReference>
<dbReference type="PDB" id="1E79">
    <property type="method" value="X-ray"/>
    <property type="resolution" value="2.40 A"/>
    <property type="chains" value="G=26-297"/>
</dbReference>
<dbReference type="PDB" id="1EFR">
    <property type="method" value="X-ray"/>
    <property type="resolution" value="3.10 A"/>
    <property type="chains" value="G=26-297"/>
</dbReference>
<dbReference type="PDB" id="1H8E">
    <property type="method" value="X-ray"/>
    <property type="resolution" value="2.00 A"/>
    <property type="chains" value="G=26-297"/>
</dbReference>
<dbReference type="PDB" id="1H8H">
    <property type="method" value="X-ray"/>
    <property type="resolution" value="2.90 A"/>
    <property type="chains" value="G=26-297"/>
</dbReference>
<dbReference type="PDB" id="1NBM">
    <property type="method" value="X-ray"/>
    <property type="resolution" value="3.00 A"/>
    <property type="chains" value="G=26-297"/>
</dbReference>
<dbReference type="PDB" id="1OHH">
    <property type="method" value="X-ray"/>
    <property type="resolution" value="2.80 A"/>
    <property type="chains" value="G=26-297"/>
</dbReference>
<dbReference type="PDB" id="1QO1">
    <property type="method" value="X-ray"/>
    <property type="resolution" value="3.90 A"/>
    <property type="chains" value="G=26-69, G=102-115, G=234-297"/>
</dbReference>
<dbReference type="PDB" id="1W0J">
    <property type="method" value="X-ray"/>
    <property type="resolution" value="2.20 A"/>
    <property type="chains" value="G=26-297"/>
</dbReference>
<dbReference type="PDB" id="1W0K">
    <property type="method" value="X-ray"/>
    <property type="resolution" value="2.85 A"/>
    <property type="chains" value="G=26-297"/>
</dbReference>
<dbReference type="PDB" id="2CK3">
    <property type="method" value="X-ray"/>
    <property type="resolution" value="1.90 A"/>
    <property type="chains" value="G=26-297"/>
</dbReference>
<dbReference type="PDB" id="2JDI">
    <property type="method" value="X-ray"/>
    <property type="resolution" value="1.90 A"/>
    <property type="chains" value="G=26-298"/>
</dbReference>
<dbReference type="PDB" id="2JIZ">
    <property type="method" value="X-ray"/>
    <property type="resolution" value="2.30 A"/>
    <property type="chains" value="G/N=26-297"/>
</dbReference>
<dbReference type="PDB" id="2JJ1">
    <property type="method" value="X-ray"/>
    <property type="resolution" value="2.70 A"/>
    <property type="chains" value="G/N=26-297"/>
</dbReference>
<dbReference type="PDB" id="2JJ2">
    <property type="method" value="X-ray"/>
    <property type="resolution" value="2.40 A"/>
    <property type="chains" value="G/N=26-297"/>
</dbReference>
<dbReference type="PDB" id="2V7Q">
    <property type="method" value="X-ray"/>
    <property type="resolution" value="2.10 A"/>
    <property type="chains" value="G=26-297"/>
</dbReference>
<dbReference type="PDB" id="2W6E">
    <property type="method" value="X-ray"/>
    <property type="resolution" value="6.50 A"/>
    <property type="chains" value="G=1-298"/>
</dbReference>
<dbReference type="PDB" id="2W6F">
    <property type="method" value="X-ray"/>
    <property type="resolution" value="6.00 A"/>
    <property type="chains" value="G=1-298"/>
</dbReference>
<dbReference type="PDB" id="2W6G">
    <property type="method" value="X-ray"/>
    <property type="resolution" value="6.00 A"/>
    <property type="chains" value="G=1-298"/>
</dbReference>
<dbReference type="PDB" id="2W6H">
    <property type="method" value="X-ray"/>
    <property type="resolution" value="5.00 A"/>
    <property type="chains" value="G=1-298"/>
</dbReference>
<dbReference type="PDB" id="2W6I">
    <property type="method" value="X-ray"/>
    <property type="resolution" value="4.00 A"/>
    <property type="chains" value="G=1-298"/>
</dbReference>
<dbReference type="PDB" id="2W6J">
    <property type="method" value="X-ray"/>
    <property type="resolution" value="3.84 A"/>
    <property type="chains" value="G=1-298"/>
</dbReference>
<dbReference type="PDB" id="2WSS">
    <property type="method" value="X-ray"/>
    <property type="resolution" value="3.20 A"/>
    <property type="chains" value="G/P=26-297"/>
</dbReference>
<dbReference type="PDB" id="2XND">
    <property type="method" value="X-ray"/>
    <property type="resolution" value="3.50 A"/>
    <property type="chains" value="G=26-297"/>
</dbReference>
<dbReference type="PDB" id="4ASU">
    <property type="method" value="X-ray"/>
    <property type="resolution" value="2.60 A"/>
    <property type="chains" value="G=26-298"/>
</dbReference>
<dbReference type="PDB" id="4TSF">
    <property type="method" value="X-ray"/>
    <property type="resolution" value="3.20 A"/>
    <property type="chains" value="G=26-298"/>
</dbReference>
<dbReference type="PDB" id="4TT3">
    <property type="method" value="X-ray"/>
    <property type="resolution" value="3.21 A"/>
    <property type="chains" value="G=26-298"/>
</dbReference>
<dbReference type="PDB" id="4YXW">
    <property type="method" value="X-ray"/>
    <property type="resolution" value="3.10 A"/>
    <property type="chains" value="G=26-298"/>
</dbReference>
<dbReference type="PDB" id="4Z1M">
    <property type="method" value="X-ray"/>
    <property type="resolution" value="3.30 A"/>
    <property type="chains" value="G=26-298"/>
</dbReference>
<dbReference type="PDB" id="5ARA">
    <property type="method" value="EM"/>
    <property type="resolution" value="6.70 A"/>
    <property type="chains" value="G=26-298"/>
</dbReference>
<dbReference type="PDB" id="5ARE">
    <property type="method" value="EM"/>
    <property type="resolution" value="7.40 A"/>
    <property type="chains" value="G=26-298"/>
</dbReference>
<dbReference type="PDB" id="5ARH">
    <property type="method" value="EM"/>
    <property type="resolution" value="7.20 A"/>
    <property type="chains" value="G=26-298"/>
</dbReference>
<dbReference type="PDB" id="5ARI">
    <property type="method" value="EM"/>
    <property type="resolution" value="7.40 A"/>
    <property type="chains" value="G=26-298"/>
</dbReference>
<dbReference type="PDB" id="5FIJ">
    <property type="method" value="EM"/>
    <property type="resolution" value="7.40 A"/>
    <property type="chains" value="G=26-298"/>
</dbReference>
<dbReference type="PDB" id="5FIK">
    <property type="method" value="EM"/>
    <property type="resolution" value="6.40 A"/>
    <property type="chains" value="G=26-298"/>
</dbReference>
<dbReference type="PDB" id="5FIL">
    <property type="method" value="EM"/>
    <property type="resolution" value="7.10 A"/>
    <property type="chains" value="G=26-298"/>
</dbReference>
<dbReference type="PDB" id="6TT7">
    <property type="method" value="EM"/>
    <property type="resolution" value="3.50 A"/>
    <property type="chains" value="G=1-298"/>
</dbReference>
<dbReference type="PDB" id="6YY0">
    <property type="method" value="EM"/>
    <property type="resolution" value="3.23 A"/>
    <property type="chains" value="G=26-298"/>
</dbReference>
<dbReference type="PDB" id="6Z1R">
    <property type="method" value="EM"/>
    <property type="resolution" value="3.29 A"/>
    <property type="chains" value="G=26-298"/>
</dbReference>
<dbReference type="PDB" id="6Z1U">
    <property type="method" value="EM"/>
    <property type="resolution" value="3.47 A"/>
    <property type="chains" value="G=26-298"/>
</dbReference>
<dbReference type="PDB" id="6ZG7">
    <property type="method" value="EM"/>
    <property type="resolution" value="3.49 A"/>
    <property type="chains" value="G=26-298"/>
</dbReference>
<dbReference type="PDB" id="6ZG8">
    <property type="method" value="EM"/>
    <property type="resolution" value="3.49 A"/>
    <property type="chains" value="G=26-298"/>
</dbReference>
<dbReference type="PDB" id="6ZIK">
    <property type="method" value="EM"/>
    <property type="resolution" value="3.66 A"/>
    <property type="chains" value="G=26-298"/>
</dbReference>
<dbReference type="PDB" id="6ZPO">
    <property type="method" value="EM"/>
    <property type="resolution" value="4.00 A"/>
    <property type="chains" value="G=26-298"/>
</dbReference>
<dbReference type="PDB" id="6ZQM">
    <property type="method" value="EM"/>
    <property type="resolution" value="3.29 A"/>
    <property type="chains" value="G=26-298"/>
</dbReference>
<dbReference type="PDB" id="6ZQN">
    <property type="method" value="EM"/>
    <property type="resolution" value="4.00 A"/>
    <property type="chains" value="G=26-298"/>
</dbReference>
<dbReference type="PDB" id="7AJB">
    <property type="method" value="EM"/>
    <property type="resolution" value="9.20 A"/>
    <property type="chains" value="AG/G=26-298"/>
</dbReference>
<dbReference type="PDB" id="7AJC">
    <property type="method" value="EM"/>
    <property type="resolution" value="11.90 A"/>
    <property type="chains" value="AG/G=26-298"/>
</dbReference>
<dbReference type="PDB" id="7AJD">
    <property type="method" value="EM"/>
    <property type="resolution" value="9.00 A"/>
    <property type="chains" value="AG/G=26-298"/>
</dbReference>
<dbReference type="PDB" id="7AJE">
    <property type="method" value="EM"/>
    <property type="resolution" value="9.40 A"/>
    <property type="chains" value="AG/G=26-298"/>
</dbReference>
<dbReference type="PDB" id="7AJF">
    <property type="method" value="EM"/>
    <property type="resolution" value="8.45 A"/>
    <property type="chains" value="AG/G=26-298"/>
</dbReference>
<dbReference type="PDB" id="7AJG">
    <property type="method" value="EM"/>
    <property type="resolution" value="10.70 A"/>
    <property type="chains" value="AG/G=26-298"/>
</dbReference>
<dbReference type="PDB" id="7AJH">
    <property type="method" value="EM"/>
    <property type="resolution" value="9.70 A"/>
    <property type="chains" value="AG/G=26-298"/>
</dbReference>
<dbReference type="PDB" id="7AJI">
    <property type="method" value="EM"/>
    <property type="resolution" value="11.40 A"/>
    <property type="chains" value="AG/G=26-298"/>
</dbReference>
<dbReference type="PDB" id="7AJJ">
    <property type="method" value="EM"/>
    <property type="resolution" value="13.10 A"/>
    <property type="chains" value="AG/G=26-298"/>
</dbReference>
<dbReference type="PDBsum" id="1BMF"/>
<dbReference type="PDBsum" id="1COW"/>
<dbReference type="PDBsum" id="1E1Q"/>
<dbReference type="PDBsum" id="1E1R"/>
<dbReference type="PDBsum" id="1E79"/>
<dbReference type="PDBsum" id="1EFR"/>
<dbReference type="PDBsum" id="1H8E"/>
<dbReference type="PDBsum" id="1H8H"/>
<dbReference type="PDBsum" id="1NBM"/>
<dbReference type="PDBsum" id="1OHH"/>
<dbReference type="PDBsum" id="1QO1"/>
<dbReference type="PDBsum" id="1W0J"/>
<dbReference type="PDBsum" id="1W0K"/>
<dbReference type="PDBsum" id="2CK3"/>
<dbReference type="PDBsum" id="2JDI"/>
<dbReference type="PDBsum" id="2JIZ"/>
<dbReference type="PDBsum" id="2JJ1"/>
<dbReference type="PDBsum" id="2JJ2"/>
<dbReference type="PDBsum" id="2V7Q"/>
<dbReference type="PDBsum" id="2W6E"/>
<dbReference type="PDBsum" id="2W6F"/>
<dbReference type="PDBsum" id="2W6G"/>
<dbReference type="PDBsum" id="2W6H"/>
<dbReference type="PDBsum" id="2W6I"/>
<dbReference type="PDBsum" id="2W6J"/>
<dbReference type="PDBsum" id="2WSS"/>
<dbReference type="PDBsum" id="2XND"/>
<dbReference type="PDBsum" id="4ASU"/>
<dbReference type="PDBsum" id="4TSF"/>
<dbReference type="PDBsum" id="4TT3"/>
<dbReference type="PDBsum" id="4YXW"/>
<dbReference type="PDBsum" id="4Z1M"/>
<dbReference type="PDBsum" id="5ARA"/>
<dbReference type="PDBsum" id="5ARE"/>
<dbReference type="PDBsum" id="5ARH"/>
<dbReference type="PDBsum" id="5ARI"/>
<dbReference type="PDBsum" id="5FIJ"/>
<dbReference type="PDBsum" id="5FIK"/>
<dbReference type="PDBsum" id="5FIL"/>
<dbReference type="PDBsum" id="6TT7"/>
<dbReference type="PDBsum" id="6YY0"/>
<dbReference type="PDBsum" id="6Z1R"/>
<dbReference type="PDBsum" id="6Z1U"/>
<dbReference type="PDBsum" id="6ZG7"/>
<dbReference type="PDBsum" id="6ZG8"/>
<dbReference type="PDBsum" id="6ZIK"/>
<dbReference type="PDBsum" id="6ZPO"/>
<dbReference type="PDBsum" id="6ZQM"/>
<dbReference type="PDBsum" id="6ZQN"/>
<dbReference type="PDBsum" id="7AJB"/>
<dbReference type="PDBsum" id="7AJC"/>
<dbReference type="PDBsum" id="7AJD"/>
<dbReference type="PDBsum" id="7AJE"/>
<dbReference type="PDBsum" id="7AJF"/>
<dbReference type="PDBsum" id="7AJG"/>
<dbReference type="PDBsum" id="7AJH"/>
<dbReference type="PDBsum" id="7AJI"/>
<dbReference type="PDBsum" id="7AJJ"/>
<dbReference type="EMDB" id="EMD-10573"/>
<dbReference type="EMDB" id="EMD-11001"/>
<dbReference type="EMDB" id="EMD-11039"/>
<dbReference type="EMDB" id="EMD-11040"/>
<dbReference type="EMDB" id="EMD-11195"/>
<dbReference type="EMDB" id="EMD-11196"/>
<dbReference type="EMDB" id="EMD-11227"/>
<dbReference type="EMDB" id="EMD-11342"/>
<dbReference type="EMDB" id="EMD-11368"/>
<dbReference type="EMDB" id="EMD-11369"/>
<dbReference type="EMDB" id="EMD-11428"/>
<dbReference type="EMDB" id="EMD-11429"/>
<dbReference type="EMDB" id="EMD-11430"/>
<dbReference type="SMR" id="P05631"/>
<dbReference type="CORUM" id="P05631"/>
<dbReference type="DIP" id="DIP-47546N"/>
<dbReference type="FunCoup" id="P05631">
    <property type="interactions" value="2189"/>
</dbReference>
<dbReference type="IntAct" id="P05631">
    <property type="interactions" value="5"/>
</dbReference>
<dbReference type="MINT" id="P05631"/>
<dbReference type="STRING" id="9913.ENSBTAP00000064321"/>
<dbReference type="BindingDB" id="P05631"/>
<dbReference type="ChEMBL" id="CHEMBL612444"/>
<dbReference type="GlyGen" id="P05631">
    <property type="glycosylation" value="1 site, 1 O-linked glycan (1 site)"/>
</dbReference>
<dbReference type="iPTMnet" id="P05631"/>
<dbReference type="PaxDb" id="9913-ENSBTAP00000018505"/>
<dbReference type="PeptideAtlas" id="P05631"/>
<dbReference type="Ensembl" id="ENSBTAT00000018505.6">
    <molecule id="P05631-1"/>
    <property type="protein sequence ID" value="ENSBTAP00000018505.5"/>
    <property type="gene ID" value="ENSBTAG00000013930.7"/>
</dbReference>
<dbReference type="Ensembl" id="ENSBTAT00000076091.2">
    <molecule id="P05631-2"/>
    <property type="protein sequence ID" value="ENSBTAP00000060497.1"/>
    <property type="gene ID" value="ENSBTAG00000013930.7"/>
</dbReference>
<dbReference type="GeneID" id="327668"/>
<dbReference type="KEGG" id="bta:327668"/>
<dbReference type="CTD" id="509"/>
<dbReference type="VEuPathDB" id="HostDB:ENSBTAG00000013930"/>
<dbReference type="eggNOG" id="KOG1531">
    <property type="taxonomic scope" value="Eukaryota"/>
</dbReference>
<dbReference type="GeneTree" id="ENSGT00390000006837"/>
<dbReference type="HOGENOM" id="CLU_050669_4_0_1"/>
<dbReference type="InParanoid" id="P05631"/>
<dbReference type="OMA" id="MQITSAM"/>
<dbReference type="OrthoDB" id="239812at2759"/>
<dbReference type="TreeFam" id="TF105765"/>
<dbReference type="Reactome" id="R-BTA-163210">
    <property type="pathway name" value="Formation of ATP by chemiosmotic coupling"/>
</dbReference>
<dbReference type="Reactome" id="R-BTA-8949613">
    <property type="pathway name" value="Cristae formation"/>
</dbReference>
<dbReference type="Reactome" id="R-BTA-9837999">
    <property type="pathway name" value="Mitochondrial protein degradation"/>
</dbReference>
<dbReference type="EvolutionaryTrace" id="P05631"/>
<dbReference type="Proteomes" id="UP000009136">
    <property type="component" value="Chromosome 13"/>
</dbReference>
<dbReference type="Bgee" id="ENSBTAG00000013930">
    <property type="expression patterns" value="Expressed in cardiac ventricle and 106 other cell types or tissues"/>
</dbReference>
<dbReference type="GO" id="GO:0005743">
    <property type="term" value="C:mitochondrial inner membrane"/>
    <property type="evidence" value="ECO:0007669"/>
    <property type="project" value="UniProtKB-SubCell"/>
</dbReference>
<dbReference type="GO" id="GO:0005739">
    <property type="term" value="C:mitochondrion"/>
    <property type="evidence" value="ECO:0000305"/>
    <property type="project" value="UniProtKB"/>
</dbReference>
<dbReference type="GO" id="GO:0045259">
    <property type="term" value="C:proton-transporting ATP synthase complex"/>
    <property type="evidence" value="ECO:0000314"/>
    <property type="project" value="UniProtKB"/>
</dbReference>
<dbReference type="GO" id="GO:0046933">
    <property type="term" value="F:proton-transporting ATP synthase activity, rotational mechanism"/>
    <property type="evidence" value="ECO:0007669"/>
    <property type="project" value="Ensembl"/>
</dbReference>
<dbReference type="GO" id="GO:0015986">
    <property type="term" value="P:proton motive force-driven ATP synthesis"/>
    <property type="evidence" value="ECO:0000318"/>
    <property type="project" value="GO_Central"/>
</dbReference>
<dbReference type="GO" id="GO:0042776">
    <property type="term" value="P:proton motive force-driven mitochondrial ATP synthesis"/>
    <property type="evidence" value="ECO:0007669"/>
    <property type="project" value="Ensembl"/>
</dbReference>
<dbReference type="CDD" id="cd12151">
    <property type="entry name" value="F1-ATPase_gamma"/>
    <property type="match status" value="1"/>
</dbReference>
<dbReference type="FunFam" id="1.10.287.80:FF:000007">
    <property type="entry name" value="ATP synthase gamma chain"/>
    <property type="match status" value="1"/>
</dbReference>
<dbReference type="FunFam" id="3.40.1380.10:FF:000003">
    <property type="entry name" value="ATP synthase subunit gamma"/>
    <property type="match status" value="1"/>
</dbReference>
<dbReference type="FunFam" id="1.10.287.80:FF:000013">
    <property type="entry name" value="ATP synthase subunit gamma, mitochondrial"/>
    <property type="match status" value="1"/>
</dbReference>
<dbReference type="Gene3D" id="3.40.1380.10">
    <property type="match status" value="1"/>
</dbReference>
<dbReference type="Gene3D" id="1.10.287.80">
    <property type="entry name" value="ATP synthase, gamma subunit, helix hairpin domain"/>
    <property type="match status" value="1"/>
</dbReference>
<dbReference type="InterPro" id="IPR035968">
    <property type="entry name" value="ATP_synth_F1_ATPase_gsu"/>
</dbReference>
<dbReference type="InterPro" id="IPR000131">
    <property type="entry name" value="ATP_synth_F1_gsu"/>
</dbReference>
<dbReference type="InterPro" id="IPR023632">
    <property type="entry name" value="ATP_synth_F1_gsu_CS"/>
</dbReference>
<dbReference type="NCBIfam" id="TIGR01146">
    <property type="entry name" value="ATPsyn_F1gamma"/>
    <property type="match status" value="1"/>
</dbReference>
<dbReference type="PANTHER" id="PTHR11693">
    <property type="entry name" value="ATP SYNTHASE GAMMA CHAIN"/>
    <property type="match status" value="1"/>
</dbReference>
<dbReference type="PANTHER" id="PTHR11693:SF22">
    <property type="entry name" value="ATP SYNTHASE SUBUNIT GAMMA, MITOCHONDRIAL"/>
    <property type="match status" value="1"/>
</dbReference>
<dbReference type="Pfam" id="PF00231">
    <property type="entry name" value="ATP-synt"/>
    <property type="match status" value="1"/>
</dbReference>
<dbReference type="PIRSF" id="PIRSF039089">
    <property type="entry name" value="ATP_synthase_gamma"/>
    <property type="match status" value="1"/>
</dbReference>
<dbReference type="PRINTS" id="PR00126">
    <property type="entry name" value="ATPASEGAMMA"/>
</dbReference>
<dbReference type="SUPFAM" id="SSF52943">
    <property type="entry name" value="ATP synthase (F1-ATPase), gamma subunit"/>
    <property type="match status" value="1"/>
</dbReference>
<dbReference type="PROSITE" id="PS00153">
    <property type="entry name" value="ATPASE_GAMMA"/>
    <property type="match status" value="1"/>
</dbReference>
<evidence type="ECO:0000250" key="1">
    <source>
        <dbReference type="UniProtKB" id="P19483"/>
    </source>
</evidence>
<evidence type="ECO:0000250" key="2">
    <source>
        <dbReference type="UniProtKB" id="P36542"/>
    </source>
</evidence>
<evidence type="ECO:0000250" key="3">
    <source>
        <dbReference type="UniProtKB" id="Q91VR2"/>
    </source>
</evidence>
<evidence type="ECO:0000269" key="4">
    <source>
    </source>
</evidence>
<evidence type="ECO:0000269" key="5">
    <source>
    </source>
</evidence>
<evidence type="ECO:0000269" key="6">
    <source>
    </source>
</evidence>
<evidence type="ECO:0000269" key="7">
    <source>
    </source>
</evidence>
<evidence type="ECO:0000269" key="8">
    <source>
    </source>
</evidence>
<evidence type="ECO:0000269" key="9">
    <source>
    </source>
</evidence>
<evidence type="ECO:0000269" key="10">
    <source>
    </source>
</evidence>
<evidence type="ECO:0000269" key="11">
    <source>
    </source>
</evidence>
<evidence type="ECO:0000269" key="12">
    <source>
    </source>
</evidence>
<evidence type="ECO:0000269" key="13">
    <source>
    </source>
</evidence>
<evidence type="ECO:0000269" key="14">
    <source>
    </source>
</evidence>
<evidence type="ECO:0000269" key="15">
    <source>
    </source>
</evidence>
<evidence type="ECO:0000305" key="16"/>
<evidence type="ECO:0007829" key="17">
    <source>
        <dbReference type="PDB" id="1W0K"/>
    </source>
</evidence>
<evidence type="ECO:0007829" key="18">
    <source>
        <dbReference type="PDB" id="6TT7"/>
    </source>
</evidence>
<evidence type="ECO:0007829" key="19">
    <source>
        <dbReference type="PDB" id="6YY0"/>
    </source>
</evidence>
<evidence type="ECO:0007829" key="20">
    <source>
        <dbReference type="PDB" id="6ZG7"/>
    </source>
</evidence>
<comment type="function">
    <text evidence="1 2">Subunit gamma, of the mitochondrial membrane ATP synthase complex (F(1)F(0) ATP synthase or Complex V) that produces ATP from ADP in the presence of a proton gradient across the membrane which is generated by electron transport complexes of the respiratory chain. ATP synthase complex consist of a soluble F(1) head domain - the catalytic core - and a membrane F(1) domain - the membrane proton channel. These two domains are linked by a central stalk rotating inside the F(1) region and a stationary peripheral stalk. During catalysis, ATP synthesis in the catalytic domain of F(1) is coupled via a rotary mechanism of the central stalk subunits to proton translocation (By similarity). In vivo, can only synthesize ATP although its ATP hydrolase activity can be activated artificially in vitro (By similarity). With the central stalk subunit delta, is essential for the biogenesis of F(1) catalytic part of the ATP synthase complex namely in the formation of F1 assembly intermediate (By similarity).</text>
</comment>
<comment type="subunit">
    <text evidence="2 3 4 6 7 8 9 10 11 12 13 15">Component of the ATP synthase complex composed at least of ATP5F1A/subunit alpha, ATP5F1B/subunit beta, ATP5MC1/subunit c (homooctomer), MT-ATP6/subunit a, MT-ATP8/subunit 8, ATP5ME/subunit e, ATP5MF/subunit f, ATP5MG/subunit g, ATP5MK/subunit k, ATP5MJ/subunit j, ATP5F1C/subunit gamma, ATP5F1D/subunit delta, ATP5F1E/subunit epsilon, ATP5PF/subunit F6, ATP5PB/subunit b, ATP5PD/subunit d, ATP5PO/subunit OSCP (PubMed:12923572, PubMed:17570365, PubMed:17895376, PubMed:1827992, PubMed:23407638, PubMed:25851905, PubMed:2864455, PubMed:8065448, PubMed:8790345, PubMed:9687365). ATP synthase complex consists of a soluble F(1) head domain (subunits alpha(3) and beta(3)) - the catalytic core - and a membrane F(0) domain - the membrane proton channel (subunits c, a, 8, e, f, g, k and j). These two domains are linked by a central stalk (subunits gamma, delta, and epsilon) rotating inside the F1 region and a stationary peripheral stalk (subunits F6, b, d, and OSCP) (By similarity). Interacts with FLVCR2; this interaction occurs in the absence of heme and is disrupted upon heme binding (By similarity).</text>
</comment>
<comment type="subcellular location">
    <subcellularLocation>
        <location evidence="5 8 9 11 12 14">Mitochondrion inner membrane</location>
        <topology evidence="5 9 11 12 14">Peripheral membrane protein</topology>
        <orientation evidence="5 14">Matrix side</orientation>
    </subcellularLocation>
</comment>
<comment type="alternative products">
    <event type="alternative splicing"/>
    <isoform>
        <id>P05631-1</id>
        <name>Liver</name>
        <name>L</name>
        <sequence type="displayed"/>
    </isoform>
    <isoform>
        <id>P05631-2</id>
        <name>Heart</name>
        <name>H</name>
        <sequence type="described" ref="VSP_000438"/>
    </isoform>
</comment>
<comment type="similarity">
    <text evidence="16">Belongs to the ATPase gamma chain family.</text>
</comment>
<reference key="1">
    <citation type="journal article" date="1989" name="Biochemistry">
        <title>ATP synthase from bovine mitochondria: complementary DNA sequence of the mitochondrial import precursor of the gamma-subunit and the genomic sequence of the mature protein.</title>
        <authorList>
            <person name="Dyer M.R."/>
            <person name="Gay N.J."/>
            <person name="Powell S.J."/>
            <person name="Walker J.E."/>
        </authorList>
    </citation>
    <scope>NUCLEOTIDE SEQUENCE [GENOMIC DNA / MRNA]</scope>
</reference>
<reference key="2">
    <citation type="submission" date="2005-08" db="EMBL/GenBank/DDBJ databases">
        <authorList>
            <consortium name="NIH - Mammalian Gene Collection (MGC) project"/>
        </authorList>
    </citation>
    <scope>NUCLEOTIDE SEQUENCE [LARGE SCALE MRNA]</scope>
    <source>
        <strain>Crossbred X Angus</strain>
        <tissue>Ileum</tissue>
    </source>
</reference>
<reference key="3">
    <citation type="journal article" date="1985" name="J. Mol. Biol.">
        <title>Primary structure and subunit stoichiometry of F1-ATPase from bovine mitochondria.</title>
        <authorList>
            <person name="Walker J.E."/>
            <person name="Fearnley I.M."/>
            <person name="Gay N.J."/>
            <person name="Gibson B.W."/>
            <person name="Northrop F.D."/>
            <person name="Powell S.J."/>
            <person name="Runswick M.J."/>
            <person name="Saraste M."/>
            <person name="Tybulewicz V.L.J."/>
        </authorList>
    </citation>
    <scope>NUCLEOTIDE SEQUENCE [MRNA] OF 174-297</scope>
    <scope>PROTEIN SEQUENCE OF 26-297</scope>
    <scope>SUBUNIT</scope>
    <scope>SUBCELLULAR LOCATION</scope>
</reference>
<reference key="4">
    <citation type="journal article" date="1991" name="Biochemistry">
        <title>Identification of the subunits of F1F0-ATPase from bovine heart mitochondria.</title>
        <authorList>
            <person name="Walker J.E."/>
            <person name="Lutter R."/>
            <person name="Dupuis A."/>
            <person name="Runswick M.J."/>
        </authorList>
    </citation>
    <scope>PROTEIN SEQUENCE OF 26-30</scope>
    <scope>SUBUNIT</scope>
    <scope>SUBCELLULAR LOCATION</scope>
    <source>
        <tissue>Heart</tissue>
    </source>
</reference>
<reference key="5">
    <citation type="journal article" date="1993" name="FEBS Lett.">
        <title>Tissue-specific isoforms of the bovine mitochondrial ATP synthase gamma-subunit.</title>
        <authorList>
            <person name="Matsuda C."/>
            <person name="Endo H."/>
            <person name="Hirata H."/>
            <person name="Morosawa H."/>
            <person name="Nakanishi M."/>
            <person name="Kagawa Y."/>
        </authorList>
    </citation>
    <scope>NUCLEOTIDE SEQUENCE OF 286-298</scope>
    <scope>ALTERNATIVE SPLICING</scope>
    <source>
        <tissue>Heart</tissue>
        <tissue>Liver</tissue>
    </source>
</reference>
<reference key="6">
    <citation type="journal article" date="1979" name="Cell Biophys.">
        <title>Visualization of mitochondrial coupling factor F1(ATPase) by freeze-drying.</title>
        <authorList>
            <person name="Sikerwar S.S."/>
            <person name="Malhotra S.K."/>
        </authorList>
    </citation>
    <scope>SUBCELLULAR LOCATION</scope>
    <scope>TOPOLOGY</scope>
</reference>
<reference key="7">
    <citation type="journal article" date="2003" name="EMBO J.">
        <title>Structure of the mitochondrial ATP synthase by electron cryomicroscopy.</title>
        <authorList>
            <person name="Rubinstein J.L."/>
            <person name="Walker J.E."/>
            <person name="Henderson R."/>
        </authorList>
    </citation>
    <scope>SUBCELLULAR LOCATION</scope>
    <scope>TOPOLOGY</scope>
</reference>
<reference key="8">
    <citation type="journal article" date="2007" name="FEBS Lett.">
        <title>Association of two proteolipids of unknown function with ATP synthase from bovine heart mitochondria.</title>
        <authorList>
            <person name="Chen R."/>
            <person name="Runswick M.J."/>
            <person name="Carroll J."/>
            <person name="Fearnley I.M."/>
            <person name="Walker J.E."/>
        </authorList>
    </citation>
    <scope>IDENTIFICATION IN THE ATP SYNTHASE COMPLEX</scope>
</reference>
<reference key="9">
    <citation type="journal article" date="2013" name="Open Biol.">
        <title>The affinity purification and characterization of ATP synthase complexes from mitochondria.</title>
        <authorList>
            <person name="Runswick M.J."/>
            <person name="Bason J.V."/>
            <person name="Montgomery M.G."/>
            <person name="Robinson G.C."/>
            <person name="Fearnley I.M."/>
            <person name="Walker J.E."/>
        </authorList>
    </citation>
    <scope>FUNCTION</scope>
    <scope>IDENTIFICATION IN THE ATP SYNTHASE COMPLEX</scope>
    <scope>SUBCELLULAR LOCATION</scope>
    <scope>SUBUNIT</scope>
</reference>
<reference key="10">
    <citation type="journal article" date="2015" name="J. Biol. Chem.">
        <title>Organization of Subunits in the Membrane Domain of the Bovine F-ATPase Revealed by Covalent Cross-linking.</title>
        <authorList>
            <person name="Lee J."/>
            <person name="Ding S."/>
            <person name="Walpole T.B."/>
            <person name="Holding A.N."/>
            <person name="Montgomery M.G."/>
            <person name="Fearnley I.M."/>
            <person name="Walker J.E."/>
        </authorList>
    </citation>
    <scope>IDENTIFICATION BY MASS SPECTROMETRY</scope>
    <scope>IDENTIFICATION IN THE ATP SYNTHASE COMPLEX</scope>
</reference>
<reference key="11">
    <citation type="journal article" date="1994" name="Nature">
        <title>Structure at 2.8-A resolution of F1-ATPase from bovine heart mitochondria.</title>
        <authorList>
            <person name="Abrahams J.P."/>
            <person name="Leslie A.G.W."/>
            <person name="Lutter R."/>
            <person name="Walker J.E."/>
        </authorList>
    </citation>
    <scope>X-RAY CRYSTALLOGRAPHY (2.8 ANGSTROMS)</scope>
    <scope>SUBCELLULAR LOCATION</scope>
    <scope>SUBUNIT</scope>
</reference>
<reference key="12">
    <citation type="journal article" date="1996" name="Proc. Natl. Acad. Sci. U.S.A.">
        <title>The structure of bovine F1-ATPase complexed with the peptide antibiotic efrapeptin.</title>
        <authorList>
            <person name="Abrahams J.P."/>
            <person name="Buchanan S.K."/>
            <person name="van Raaij M.J."/>
            <person name="Fearnley I.M."/>
            <person name="Leslie A.G."/>
            <person name="Walker J.E."/>
        </authorList>
    </citation>
    <scope>X-RAY CRYSTALLOGRAPHY (3.1 ANGSTROMS)</scope>
    <scope>SUBUNIT</scope>
</reference>
<reference key="13">
    <citation type="journal article" date="1998" name="Structure">
        <title>Bovine F1-ATPase covalently inhibited with 4-chloro-7-nitrobenzofurazan: the structure provides further support for a rotary catalytic mechanism.</title>
        <authorList>
            <person name="Orriss G.L."/>
            <person name="Leslie A.G."/>
            <person name="Braig K."/>
            <person name="Walker J.E."/>
        </authorList>
    </citation>
    <scope>X-RAY CRYSTALLOGRAPHY (3.0 ANGSTROMS)</scope>
    <scope>SUBUNIT</scope>
</reference>
<reference key="14">
    <citation type="journal article" date="2003" name="Nat. Struct. Biol.">
        <title>The structure of bovine F1-ATPase in complex with its regulatory protein IF1.</title>
        <authorList>
            <person name="Cabezon E."/>
            <person name="Montgomery M.G."/>
            <person name="Leslie A.G."/>
            <person name="Walker J.E."/>
        </authorList>
    </citation>
    <scope>X-RAY CRYSTALLOGRAPHY (2.8 ANGSTROMS) OF 26-297 IN COMPLEX WITH ATPIF1; ATP5F1A AND ATP5F1B</scope>
    <scope>SUBUNIT</scope>
</reference>
<reference key="15">
    <citation type="journal article" date="2007" name="Proc. Natl. Acad. Sci. U.S.A.">
        <title>How the regulatory protein, IF(1), inhibits F(1)-ATPase from bovine mitochondria.</title>
        <authorList>
            <person name="Gledhill J.R."/>
            <person name="Montgomery M.G."/>
            <person name="Leslie A.G."/>
            <person name="Walker J.E."/>
        </authorList>
    </citation>
    <scope>X-RAY CRYSTALLOGRAPHY (2.1 ANGSTROMS) OF 26-297 IN COMPLEX WITH ATPIF1; ATP5F1A; ATP5F1B; ATP5F1D AND ATP5F1E</scope>
    <scope>SUBUNIT</scope>
</reference>
<accession>P05631</accession>
<accession>Q3T0B4</accession>
<name>ATPG_BOVIN</name>
<gene>
    <name evidence="2" type="primary">ATP5F1C</name>
    <name type="synonym">ATP5C</name>
    <name type="synonym">ATP5C1</name>
</gene>
<proteinExistence type="evidence at protein level"/>
<keyword id="KW-0002">3D-structure</keyword>
<keyword id="KW-0007">Acetylation</keyword>
<keyword id="KW-0025">Alternative splicing</keyword>
<keyword id="KW-0066">ATP synthesis</keyword>
<keyword id="KW-0139">CF(1)</keyword>
<keyword id="KW-0903">Direct protein sequencing</keyword>
<keyword id="KW-0375">Hydrogen ion transport</keyword>
<keyword id="KW-0406">Ion transport</keyword>
<keyword id="KW-0472">Membrane</keyword>
<keyword id="KW-0496">Mitochondrion</keyword>
<keyword id="KW-0999">Mitochondrion inner membrane</keyword>
<keyword id="KW-0597">Phosphoprotein</keyword>
<keyword id="KW-1185">Reference proteome</keyword>
<keyword id="KW-0809">Transit peptide</keyword>
<keyword id="KW-0813">Transport</keyword>
<sequence length="298" mass="33072">MFSRAGVAGLSAWTVQPQWIQVRNMATLKDITRRLKSIKNIQKITKSMKMVAAAKYARAERELKPARVYGVGSLALYEKADIKTPEDKKKHLIIGVSSDRGLCGAIHSSVAKQMKSEAANLAAAGKEVKIIGVGDKIRSILHRTHSDQFLVTFKEVGRRPPTFGDASVIALELLNSGYEFDEGSIIFNRFRSVISYKTEEKPIFSLDTISSAESMSIYDDIDADVLRNYQEYSLANIIYYSLKESTTSEQSARMTAMDNASKNASEMIDKLTLTFNRTRQAVITKELIEIISGAAALD</sequence>
<organism>
    <name type="scientific">Bos taurus</name>
    <name type="common">Bovine</name>
    <dbReference type="NCBI Taxonomy" id="9913"/>
    <lineage>
        <taxon>Eukaryota</taxon>
        <taxon>Metazoa</taxon>
        <taxon>Chordata</taxon>
        <taxon>Craniata</taxon>
        <taxon>Vertebrata</taxon>
        <taxon>Euteleostomi</taxon>
        <taxon>Mammalia</taxon>
        <taxon>Eutheria</taxon>
        <taxon>Laurasiatheria</taxon>
        <taxon>Artiodactyla</taxon>
        <taxon>Ruminantia</taxon>
        <taxon>Pecora</taxon>
        <taxon>Bovidae</taxon>
        <taxon>Bovinae</taxon>
        <taxon>Bos</taxon>
    </lineage>
</organism>
<feature type="transit peptide" description="Mitochondrion" evidence="8 11">
    <location>
        <begin position="1"/>
        <end position="25"/>
    </location>
</feature>
<feature type="chain" id="PRO_0000002684" description="ATP synthase F(1) complex subunit gamma, mitochondrial">
    <location>
        <begin position="26"/>
        <end position="298"/>
    </location>
</feature>
<feature type="modified residue" description="N6-acetyllysine" evidence="3">
    <location>
        <position position="39"/>
    </location>
</feature>
<feature type="modified residue" description="N6-succinyllysine" evidence="3">
    <location>
        <position position="49"/>
    </location>
</feature>
<feature type="modified residue" description="N6-acetyllysine" evidence="2">
    <location>
        <position position="55"/>
    </location>
</feature>
<feature type="modified residue" description="N6-acetyllysine; alternate" evidence="3">
    <location>
        <position position="115"/>
    </location>
</feature>
<feature type="modified residue" description="N6-succinyllysine; alternate" evidence="3">
    <location>
        <position position="115"/>
    </location>
</feature>
<feature type="modified residue" description="Phosphoserine" evidence="2">
    <location>
        <position position="146"/>
    </location>
</feature>
<feature type="modified residue" description="N6-acetyllysine; alternate" evidence="2">
    <location>
        <position position="154"/>
    </location>
</feature>
<feature type="modified residue" description="N6-succinyllysine; alternate" evidence="3">
    <location>
        <position position="154"/>
    </location>
</feature>
<feature type="modified residue" description="N6-acetyllysine" evidence="2">
    <location>
        <position position="197"/>
    </location>
</feature>
<feature type="modified residue" description="N6-succinyllysine" evidence="3">
    <location>
        <position position="270"/>
    </location>
</feature>
<feature type="splice variant" id="VSP_000438" description="In isoform Heart." evidence="16">
    <location>
        <position position="298"/>
    </location>
</feature>
<feature type="sequence conflict" description="In Ref. 2; AAI02467." evidence="16" ref="2">
    <original>E</original>
    <variation>G</variation>
    <location>
        <position position="249"/>
    </location>
</feature>
<feature type="helix" evidence="17">
    <location>
        <begin position="28"/>
        <end position="60"/>
    </location>
</feature>
<feature type="strand" evidence="17">
    <location>
        <begin position="61"/>
        <end position="64"/>
    </location>
</feature>
<feature type="helix" evidence="20">
    <location>
        <begin position="76"/>
        <end position="79"/>
    </location>
</feature>
<feature type="strand" evidence="19">
    <location>
        <begin position="90"/>
        <end position="96"/>
    </location>
</feature>
<feature type="strand" evidence="18">
    <location>
        <begin position="103"/>
        <end position="105"/>
    </location>
</feature>
<feature type="helix" evidence="17">
    <location>
        <begin position="106"/>
        <end position="112"/>
    </location>
</feature>
<feature type="turn" evidence="20">
    <location>
        <begin position="123"/>
        <end position="125"/>
    </location>
</feature>
<feature type="strand" evidence="19">
    <location>
        <begin position="127"/>
        <end position="134"/>
    </location>
</feature>
<feature type="helix" evidence="19">
    <location>
        <begin position="135"/>
        <end position="140"/>
    </location>
</feature>
<feature type="strand" evidence="19">
    <location>
        <begin position="142"/>
        <end position="145"/>
    </location>
</feature>
<feature type="turn" evidence="20">
    <location>
        <begin position="146"/>
        <end position="148"/>
    </location>
</feature>
<feature type="strand" evidence="19">
    <location>
        <begin position="149"/>
        <end position="154"/>
    </location>
</feature>
<feature type="strand" evidence="19">
    <location>
        <begin position="157"/>
        <end position="159"/>
    </location>
</feature>
<feature type="helix" evidence="19">
    <location>
        <begin position="163"/>
        <end position="175"/>
    </location>
</feature>
<feature type="strand" evidence="19">
    <location>
        <begin position="181"/>
        <end position="192"/>
    </location>
</feature>
<feature type="strand" evidence="19">
    <location>
        <begin position="195"/>
        <end position="203"/>
    </location>
</feature>
<feature type="helix" evidence="19">
    <location>
        <begin position="206"/>
        <end position="210"/>
    </location>
</feature>
<feature type="helix" evidence="19">
    <location>
        <begin position="213"/>
        <end position="216"/>
    </location>
</feature>
<feature type="strand" evidence="19">
    <location>
        <begin position="217"/>
        <end position="220"/>
    </location>
</feature>
<feature type="helix" evidence="17">
    <location>
        <begin position="235"/>
        <end position="295"/>
    </location>
</feature>